<keyword id="KW-0028">Amino-acid biosynthesis</keyword>
<keyword id="KW-0057">Aromatic amino acid biosynthesis</keyword>
<keyword id="KW-0067">ATP-binding</keyword>
<keyword id="KW-0150">Chloroplast</keyword>
<keyword id="KW-0418">Kinase</keyword>
<keyword id="KW-0460">Magnesium</keyword>
<keyword id="KW-0479">Metal-binding</keyword>
<keyword id="KW-0547">Nucleotide-binding</keyword>
<keyword id="KW-0934">Plastid</keyword>
<keyword id="KW-1185">Reference proteome</keyword>
<keyword id="KW-0808">Transferase</keyword>
<keyword id="KW-0809">Transit peptide</keyword>
<name>SK2_ORYSJ</name>
<organism>
    <name type="scientific">Oryza sativa subsp. japonica</name>
    <name type="common">Rice</name>
    <dbReference type="NCBI Taxonomy" id="39947"/>
    <lineage>
        <taxon>Eukaryota</taxon>
        <taxon>Viridiplantae</taxon>
        <taxon>Streptophyta</taxon>
        <taxon>Embryophyta</taxon>
        <taxon>Tracheophyta</taxon>
        <taxon>Spermatophyta</taxon>
        <taxon>Magnoliopsida</taxon>
        <taxon>Liliopsida</taxon>
        <taxon>Poales</taxon>
        <taxon>Poaceae</taxon>
        <taxon>BOP clade</taxon>
        <taxon>Oryzoideae</taxon>
        <taxon>Oryzeae</taxon>
        <taxon>Oryzinae</taxon>
        <taxon>Oryza</taxon>
        <taxon>Oryza sativa</taxon>
    </lineage>
</organism>
<proteinExistence type="evidence at protein level"/>
<comment type="function">
    <text evidence="4">Catalyzes the specific phosphorylation of the 3-hydroxyl group of shikimic acid using ATP as a cosubstrate.</text>
</comment>
<comment type="catalytic activity">
    <reaction evidence="4">
        <text>shikimate + ATP = 3-phosphoshikimate + ADP + H(+)</text>
        <dbReference type="Rhea" id="RHEA:13121"/>
        <dbReference type="ChEBI" id="CHEBI:15378"/>
        <dbReference type="ChEBI" id="CHEBI:30616"/>
        <dbReference type="ChEBI" id="CHEBI:36208"/>
        <dbReference type="ChEBI" id="CHEBI:145989"/>
        <dbReference type="ChEBI" id="CHEBI:456216"/>
        <dbReference type="EC" id="2.7.1.71"/>
    </reaction>
</comment>
<comment type="cofactor">
    <cofactor evidence="1">
        <name>Mg(2+)</name>
        <dbReference type="ChEBI" id="CHEBI:18420"/>
    </cofactor>
    <text evidence="1">Binds 1 Mg(2+) ion per subunit.</text>
</comment>
<comment type="pathway">
    <text>Metabolic intermediate biosynthesis; chorismate biosynthesis; chorismate from D-erythrose 4-phosphate and phosphoenolpyruvate: step 5/7.</text>
</comment>
<comment type="subcellular location">
    <subcellularLocation>
        <location evidence="6">Plastid</location>
        <location evidence="6">Chloroplast</location>
    </subcellularLocation>
</comment>
<comment type="tissue specificity">
    <text evidence="4">Expressed in panicles.</text>
</comment>
<comment type="induction">
    <text evidence="4">By chitin oligosaccharide elicitor.</text>
</comment>
<comment type="similarity">
    <text evidence="5">Belongs to the shikimate kinase family.</text>
</comment>
<evidence type="ECO:0000250" key="1"/>
<evidence type="ECO:0000255" key="2"/>
<evidence type="ECO:0000256" key="3">
    <source>
        <dbReference type="SAM" id="MobiDB-lite"/>
    </source>
</evidence>
<evidence type="ECO:0000269" key="4">
    <source>
    </source>
</evidence>
<evidence type="ECO:0000305" key="5"/>
<evidence type="ECO:0000305" key="6">
    <source>
    </source>
</evidence>
<dbReference type="EC" id="2.7.1.71"/>
<dbReference type="EMBL" id="AB188835">
    <property type="protein sequence ID" value="BAD83413.1"/>
    <property type="molecule type" value="mRNA"/>
</dbReference>
<dbReference type="EMBL" id="AP003513">
    <property type="status" value="NOT_ANNOTATED_CDS"/>
    <property type="molecule type" value="Genomic_DNA"/>
</dbReference>
<dbReference type="EMBL" id="AP008212">
    <property type="protein sequence ID" value="BAF19113.2"/>
    <property type="molecule type" value="Genomic_DNA"/>
</dbReference>
<dbReference type="EMBL" id="AP014962">
    <property type="status" value="NOT_ANNOTATED_CDS"/>
    <property type="molecule type" value="Genomic_DNA"/>
</dbReference>
<dbReference type="RefSeq" id="XP_015641676.1">
    <property type="nucleotide sequence ID" value="XM_015786190.1"/>
</dbReference>
<dbReference type="SMR" id="Q5NTH3"/>
<dbReference type="FunCoup" id="Q5NTH3">
    <property type="interactions" value="228"/>
</dbReference>
<dbReference type="STRING" id="39947.Q5NTH3"/>
<dbReference type="PaxDb" id="39947-Q5NTH3"/>
<dbReference type="EnsemblPlants" id="Os06t0225800-02">
    <property type="protein sequence ID" value="Os06t0225800-02"/>
    <property type="gene ID" value="Os06g0225800"/>
</dbReference>
<dbReference type="Gramene" id="Os06t0225800-02">
    <property type="protein sequence ID" value="Os06t0225800-02"/>
    <property type="gene ID" value="Os06g0225800"/>
</dbReference>
<dbReference type="KEGG" id="dosa:Os06g0225800"/>
<dbReference type="eggNOG" id="ENOG502QTKR">
    <property type="taxonomic scope" value="Eukaryota"/>
</dbReference>
<dbReference type="HOGENOM" id="CLU_057607_0_1_1"/>
<dbReference type="InParanoid" id="Q5NTH3"/>
<dbReference type="OrthoDB" id="197068at2759"/>
<dbReference type="BRENDA" id="2.7.1.71">
    <property type="organism ID" value="4460"/>
</dbReference>
<dbReference type="PlantReactome" id="R-OSA-1119430">
    <property type="pathway name" value="Chorismate biosynthesis"/>
</dbReference>
<dbReference type="UniPathway" id="UPA00053">
    <property type="reaction ID" value="UER00088"/>
</dbReference>
<dbReference type="Proteomes" id="UP000000763">
    <property type="component" value="Chromosome 6"/>
</dbReference>
<dbReference type="Proteomes" id="UP000059680">
    <property type="component" value="Chromosome 6"/>
</dbReference>
<dbReference type="GO" id="GO:0009507">
    <property type="term" value="C:chloroplast"/>
    <property type="evidence" value="ECO:0000314"/>
    <property type="project" value="UniProtKB"/>
</dbReference>
<dbReference type="GO" id="GO:0009536">
    <property type="term" value="C:plastid"/>
    <property type="evidence" value="ECO:0000314"/>
    <property type="project" value="Gramene"/>
</dbReference>
<dbReference type="GO" id="GO:0005524">
    <property type="term" value="F:ATP binding"/>
    <property type="evidence" value="ECO:0007669"/>
    <property type="project" value="UniProtKB-KW"/>
</dbReference>
<dbReference type="GO" id="GO:0046872">
    <property type="term" value="F:metal ion binding"/>
    <property type="evidence" value="ECO:0007669"/>
    <property type="project" value="UniProtKB-KW"/>
</dbReference>
<dbReference type="GO" id="GO:0004765">
    <property type="term" value="F:shikimate kinase activity"/>
    <property type="evidence" value="ECO:0000314"/>
    <property type="project" value="Gramene"/>
</dbReference>
<dbReference type="GO" id="GO:0008652">
    <property type="term" value="P:amino acid biosynthetic process"/>
    <property type="evidence" value="ECO:0007669"/>
    <property type="project" value="UniProtKB-KW"/>
</dbReference>
<dbReference type="GO" id="GO:0009073">
    <property type="term" value="P:aromatic amino acid family biosynthetic process"/>
    <property type="evidence" value="ECO:0000314"/>
    <property type="project" value="Gramene"/>
</dbReference>
<dbReference type="GO" id="GO:0009423">
    <property type="term" value="P:chorismate biosynthetic process"/>
    <property type="evidence" value="ECO:0007669"/>
    <property type="project" value="UniProtKB-UniPathway"/>
</dbReference>
<dbReference type="GO" id="GO:0019632">
    <property type="term" value="P:shikimate metabolic process"/>
    <property type="evidence" value="ECO:0000314"/>
    <property type="project" value="UniProtKB"/>
</dbReference>
<dbReference type="CDD" id="cd00464">
    <property type="entry name" value="SK"/>
    <property type="match status" value="1"/>
</dbReference>
<dbReference type="FunFam" id="3.40.50.300:FF:000822">
    <property type="entry name" value="Shikimate kinase, chloroplastic"/>
    <property type="match status" value="1"/>
</dbReference>
<dbReference type="Gene3D" id="3.40.50.300">
    <property type="entry name" value="P-loop containing nucleotide triphosphate hydrolases"/>
    <property type="match status" value="1"/>
</dbReference>
<dbReference type="HAMAP" id="MF_00109">
    <property type="entry name" value="Shikimate_kinase"/>
    <property type="match status" value="1"/>
</dbReference>
<dbReference type="InterPro" id="IPR027417">
    <property type="entry name" value="P-loop_NTPase"/>
</dbReference>
<dbReference type="InterPro" id="IPR031322">
    <property type="entry name" value="Shikimate/glucono_kinase"/>
</dbReference>
<dbReference type="InterPro" id="IPR000623">
    <property type="entry name" value="Shikimate_kinase/TSH1"/>
</dbReference>
<dbReference type="InterPro" id="IPR023000">
    <property type="entry name" value="Shikimate_kinase_CS"/>
</dbReference>
<dbReference type="PANTHER" id="PTHR21087">
    <property type="entry name" value="SHIKIMATE KINASE"/>
    <property type="match status" value="1"/>
</dbReference>
<dbReference type="PANTHER" id="PTHR21087:SF16">
    <property type="entry name" value="SHIKIMATE KINASE 1, CHLOROPLASTIC"/>
    <property type="match status" value="1"/>
</dbReference>
<dbReference type="Pfam" id="PF01202">
    <property type="entry name" value="SKI"/>
    <property type="match status" value="1"/>
</dbReference>
<dbReference type="PRINTS" id="PR01100">
    <property type="entry name" value="SHIKIMTKNASE"/>
</dbReference>
<dbReference type="SUPFAM" id="SSF52540">
    <property type="entry name" value="P-loop containing nucleoside triphosphate hydrolases"/>
    <property type="match status" value="1"/>
</dbReference>
<dbReference type="PROSITE" id="PS01128">
    <property type="entry name" value="SHIKIMATE_KINASE"/>
    <property type="match status" value="1"/>
</dbReference>
<accession>Q5NTH3</accession>
<accession>Q0DDG0</accession>
<gene>
    <name type="primary">SK2</name>
    <name type="ordered locus">Os06g0225800</name>
    <name type="ordered locus">LOC_Os06g12150</name>
</gene>
<sequence>MEARAGLAMQSRAAVGVGAGPGVGRRGRAVIRVGKRPTAASLRVGGPAGPAAAKPLAPLYCLKASRGHDSLHNSVDEALLLKRKSEEVLFYLNGRCIYLVGMMGSGKSTVAKILAEVLGYSFFDSDKLVEQAVGMPSVAQIFKEHSEAFFRDNESSVLRDLSSMRRLVVATGGGAVIRPVNWKYMKKGLSVWLDVPLDALARRIAQVGTASRPLLDQPSSDPYTAAFSKLSMLAEQRGDAYANADARVSLEEIAAKQGHDDVSKLTPTDIAIEALLKIENFVTEHSTSSGPVGDLIVDSQNRRTKAL</sequence>
<protein>
    <recommendedName>
        <fullName>Shikimate kinase 2, chloroplastic</fullName>
        <shortName>OsSK2</shortName>
        <ecNumber>2.7.1.71</ecNumber>
    </recommendedName>
</protein>
<reference key="1">
    <citation type="journal article" date="2005" name="Planta">
        <title>Identification of three shikimate kinase genes in rice: characterization of their differential expression during panicle development and of the enzymatic activities of the encoded proteins.</title>
        <authorList>
            <person name="Kasai K."/>
            <person name="Kanno T."/>
            <person name="Akita M."/>
            <person name="Ikejiri-Kanno Y."/>
            <person name="Wakasa K."/>
            <person name="Tozawa Y."/>
        </authorList>
    </citation>
    <scope>NUCLEOTIDE SEQUENCE [MRNA]</scope>
    <scope>FUNCTION</scope>
    <scope>CATALYTIC ACTIVITY</scope>
    <scope>SUBCELLULAR LOCATION</scope>
    <scope>TISSUE SPECIFICITY</scope>
    <scope>INDUCTION</scope>
    <source>
        <strain>cv. Nipponbare</strain>
    </source>
</reference>
<reference key="2">
    <citation type="journal article" date="2005" name="Nature">
        <title>The map-based sequence of the rice genome.</title>
        <authorList>
            <consortium name="International rice genome sequencing project (IRGSP)"/>
        </authorList>
    </citation>
    <scope>NUCLEOTIDE SEQUENCE [LARGE SCALE GENOMIC DNA]</scope>
    <source>
        <strain>cv. Nipponbare</strain>
    </source>
</reference>
<reference key="3">
    <citation type="journal article" date="2008" name="Nucleic Acids Res.">
        <title>The rice annotation project database (RAP-DB): 2008 update.</title>
        <authorList>
            <consortium name="The rice annotation project (RAP)"/>
        </authorList>
    </citation>
    <scope>GENOME REANNOTATION</scope>
    <source>
        <strain>cv. Nipponbare</strain>
    </source>
</reference>
<reference key="4">
    <citation type="journal article" date="2013" name="Rice">
        <title>Improvement of the Oryza sativa Nipponbare reference genome using next generation sequence and optical map data.</title>
        <authorList>
            <person name="Kawahara Y."/>
            <person name="de la Bastide M."/>
            <person name="Hamilton J.P."/>
            <person name="Kanamori H."/>
            <person name="McCombie W.R."/>
            <person name="Ouyang S."/>
            <person name="Schwartz D.C."/>
            <person name="Tanaka T."/>
            <person name="Wu J."/>
            <person name="Zhou S."/>
            <person name="Childs K.L."/>
            <person name="Davidson R.M."/>
            <person name="Lin H."/>
            <person name="Quesada-Ocampo L."/>
            <person name="Vaillancourt B."/>
            <person name="Sakai H."/>
            <person name="Lee S.S."/>
            <person name="Kim J."/>
            <person name="Numa H."/>
            <person name="Itoh T."/>
            <person name="Buell C.R."/>
            <person name="Matsumoto T."/>
        </authorList>
    </citation>
    <scope>GENOME REANNOTATION</scope>
    <source>
        <strain>cv. Nipponbare</strain>
    </source>
</reference>
<feature type="transit peptide" description="Chloroplast" evidence="2">
    <location>
        <begin position="1"/>
        <end position="60"/>
    </location>
</feature>
<feature type="chain" id="PRO_0000421114" description="Shikimate kinase 2, chloroplastic">
    <location>
        <begin position="61"/>
        <end position="307"/>
    </location>
</feature>
<feature type="region of interest" description="Disordered" evidence="3">
    <location>
        <begin position="285"/>
        <end position="307"/>
    </location>
</feature>
<feature type="binding site" evidence="1">
    <location>
        <begin position="101"/>
        <end position="108"/>
    </location>
    <ligand>
        <name>ATP</name>
        <dbReference type="ChEBI" id="CHEBI:30616"/>
    </ligand>
</feature>
<feature type="binding site" evidence="1">
    <location>
        <position position="108"/>
    </location>
    <ligand>
        <name>Mg(2+)</name>
        <dbReference type="ChEBI" id="CHEBI:18420"/>
    </ligand>
</feature>
<feature type="binding site" evidence="1">
    <location>
        <position position="126"/>
    </location>
    <ligand>
        <name>substrate</name>
    </ligand>
</feature>
<feature type="binding site" evidence="1">
    <location>
        <position position="151"/>
    </location>
    <ligand>
        <name>substrate</name>
    </ligand>
</feature>
<feature type="binding site" evidence="1">
    <location>
        <position position="173"/>
    </location>
    <ligand>
        <name>substrate</name>
    </ligand>
</feature>
<feature type="binding site" evidence="1">
    <location>
        <position position="212"/>
    </location>
    <ligand>
        <name>ATP</name>
        <dbReference type="ChEBI" id="CHEBI:30616"/>
    </ligand>
</feature>